<reference key="1">
    <citation type="journal article" date="1981" name="Nucleic Acids Res.">
        <title>DNA sequence of the rat growth hormone gene: location of the 5' terminus of the growth hormone mRNA and identification of an internal transposon-like element.</title>
        <authorList>
            <person name="Page G.S."/>
            <person name="Smith S."/>
            <person name="Goodman H.M."/>
        </authorList>
    </citation>
    <scope>NUCLEOTIDE SEQUENCE [GENOMIC DNA]</scope>
</reference>
<reference key="2">
    <citation type="journal article" date="1977" name="Nature">
        <title>Nucleotide sequence and amplification in bacteria of structural gene for rat growth hormone.</title>
        <authorList>
            <person name="Seeburg P.H."/>
            <person name="Shine J."/>
            <person name="Martial J.A."/>
            <person name="Baxter J.D."/>
            <person name="Goodman H.M."/>
        </authorList>
    </citation>
    <scope>NUCLEOTIDE SEQUENCE [MRNA]</scope>
</reference>
<reference key="3">
    <citation type="journal article" date="1981" name="Proc. Natl. Acad. Sci. U.S.A.">
        <title>Primary structure and evolution of rat growth hormone gene.</title>
        <authorList>
            <person name="Barta A."/>
            <person name="Richards R.I."/>
            <person name="Baxter J.D."/>
            <person name="Shine J."/>
        </authorList>
    </citation>
    <scope>NUCLEOTIDE SEQUENCE [GENOMIC DNA]</scope>
    <scope>DISULFIDE BONDS</scope>
    <source>
        <tissue>Liver</tissue>
    </source>
</reference>
<reference key="4">
    <citation type="journal article" date="1995" name="Neuroimmunomodulation">
        <title>Cloning and nucleotide sequencing of rat lymphocyte growth hormone cDNA.</title>
        <authorList>
            <person name="Rohn W.M."/>
            <person name="Weigent D.A."/>
        </authorList>
    </citation>
    <scope>NUCLEOTIDE SEQUENCE [MRNA]</scope>
    <source>
        <strain>Sprague-Dawley</strain>
    </source>
</reference>
<comment type="function">
    <text>Plays an important role in growth control. Its major role in stimulating body growth is to stimulate the liver and other tissues to secrete IGF1. It stimulates both the differentiation and proliferation of myoblasts. It also stimulates amino acid uptake and protein synthesis in muscle and other tissues.</text>
</comment>
<comment type="subcellular location">
    <subcellularLocation>
        <location>Secreted</location>
    </subcellularLocation>
</comment>
<comment type="similarity">
    <text evidence="4">Belongs to the somatotropin/prolactin family.</text>
</comment>
<evidence type="ECO:0000250" key="1"/>
<evidence type="ECO:0000250" key="2">
    <source>
        <dbReference type="UniProtKB" id="P01241"/>
    </source>
</evidence>
<evidence type="ECO:0000269" key="3">
    <source>
    </source>
</evidence>
<evidence type="ECO:0000305" key="4"/>
<keyword id="KW-1015">Disulfide bond</keyword>
<keyword id="KW-0372">Hormone</keyword>
<keyword id="KW-0479">Metal-binding</keyword>
<keyword id="KW-0597">Phosphoprotein</keyword>
<keyword id="KW-1185">Reference proteome</keyword>
<keyword id="KW-0964">Secreted</keyword>
<keyword id="KW-0732">Signal</keyword>
<keyword id="KW-0862">Zinc</keyword>
<feature type="signal peptide" evidence="1">
    <location>
        <begin position="1"/>
        <end position="26"/>
    </location>
</feature>
<feature type="chain" id="PRO_0000032998" description="Somatotropin">
    <location>
        <begin position="27"/>
        <end position="216"/>
    </location>
</feature>
<feature type="binding site" evidence="1">
    <location>
        <position position="45"/>
    </location>
    <ligand>
        <name>Zn(2+)</name>
        <dbReference type="ChEBI" id="CHEBI:29105"/>
    </ligand>
</feature>
<feature type="binding site" evidence="1">
    <location>
        <position position="198"/>
    </location>
    <ligand>
        <name>Zn(2+)</name>
        <dbReference type="ChEBI" id="CHEBI:29105"/>
    </ligand>
</feature>
<feature type="modified residue" description="Phosphoserine" evidence="2">
    <location>
        <position position="131"/>
    </location>
</feature>
<feature type="disulfide bond" evidence="3">
    <location>
        <begin position="78"/>
        <end position="189"/>
    </location>
</feature>
<feature type="disulfide bond" evidence="3">
    <location>
        <begin position="206"/>
        <end position="214"/>
    </location>
</feature>
<feature type="sequence conflict" description="In Ref. 2 and 4." evidence="4" ref="2 4">
    <original>F</original>
    <variation>L</variation>
    <location>
        <position position="27"/>
    </location>
</feature>
<proteinExistence type="evidence at protein level"/>
<accession>P01244</accession>
<protein>
    <recommendedName>
        <fullName>Somatotropin</fullName>
    </recommendedName>
    <alternativeName>
        <fullName>Growth hormone</fullName>
    </alternativeName>
</protein>
<name>SOMA_RAT</name>
<organism>
    <name type="scientific">Rattus norvegicus</name>
    <name type="common">Rat</name>
    <dbReference type="NCBI Taxonomy" id="10116"/>
    <lineage>
        <taxon>Eukaryota</taxon>
        <taxon>Metazoa</taxon>
        <taxon>Chordata</taxon>
        <taxon>Craniata</taxon>
        <taxon>Vertebrata</taxon>
        <taxon>Euteleostomi</taxon>
        <taxon>Mammalia</taxon>
        <taxon>Eutheria</taxon>
        <taxon>Euarchontoglires</taxon>
        <taxon>Glires</taxon>
        <taxon>Rodentia</taxon>
        <taxon>Myomorpha</taxon>
        <taxon>Muroidea</taxon>
        <taxon>Muridae</taxon>
        <taxon>Murinae</taxon>
        <taxon>Rattus</taxon>
    </lineage>
</organism>
<dbReference type="EMBL" id="V01238">
    <property type="protein sequence ID" value="CAA24548.1"/>
    <property type="molecule type" value="Genomic_DNA"/>
</dbReference>
<dbReference type="EMBL" id="V01237">
    <property type="protein sequence ID" value="CAA24547.1"/>
    <property type="molecule type" value="mRNA"/>
</dbReference>
<dbReference type="EMBL" id="V01239">
    <property type="protein sequence ID" value="CAA24549.1"/>
    <property type="molecule type" value="Genomic_DNA"/>
</dbReference>
<dbReference type="EMBL" id="U62779">
    <property type="protein sequence ID" value="AAB04025.1"/>
    <property type="molecule type" value="mRNA"/>
</dbReference>
<dbReference type="PIR" id="A93725">
    <property type="entry name" value="STRT"/>
</dbReference>
<dbReference type="RefSeq" id="NP_001030020.2">
    <property type="nucleotide sequence ID" value="NM_001034848.2"/>
</dbReference>
<dbReference type="SMR" id="P01244"/>
<dbReference type="BioGRID" id="246561">
    <property type="interactions" value="1"/>
</dbReference>
<dbReference type="FunCoup" id="P01244">
    <property type="interactions" value="9"/>
</dbReference>
<dbReference type="STRING" id="10116.ENSRNOP00000015818"/>
<dbReference type="PhosphoSitePlus" id="P01244"/>
<dbReference type="PaxDb" id="10116-ENSRNOP00000015818"/>
<dbReference type="Ensembl" id="ENSRNOT00000015818.6">
    <property type="protein sequence ID" value="ENSRNOP00000015818.4"/>
    <property type="gene ID" value="ENSRNOG00000011207.6"/>
</dbReference>
<dbReference type="GeneID" id="24391"/>
<dbReference type="KEGG" id="rno:24391"/>
<dbReference type="UCSC" id="RGD:2686">
    <property type="organism name" value="rat"/>
</dbReference>
<dbReference type="AGR" id="RGD:2686"/>
<dbReference type="CTD" id="2688"/>
<dbReference type="RGD" id="2686">
    <property type="gene designation" value="Gh1"/>
</dbReference>
<dbReference type="eggNOG" id="ENOG502R5GJ">
    <property type="taxonomic scope" value="Eukaryota"/>
</dbReference>
<dbReference type="GeneTree" id="ENSGT00950000182818"/>
<dbReference type="HOGENOM" id="CLU_088274_2_1_1"/>
<dbReference type="InParanoid" id="P01244"/>
<dbReference type="OMA" id="VAYCYSE"/>
<dbReference type="OrthoDB" id="9925773at2759"/>
<dbReference type="PhylomeDB" id="P01244"/>
<dbReference type="TreeFam" id="TF332592"/>
<dbReference type="Reactome" id="R-RNO-1170546">
    <property type="pathway name" value="Prolactin receptor signaling"/>
</dbReference>
<dbReference type="Reactome" id="R-RNO-422085">
    <property type="pathway name" value="Synthesis, secretion, and deacylation of Ghrelin"/>
</dbReference>
<dbReference type="Reactome" id="R-RNO-982772">
    <property type="pathway name" value="Growth hormone receptor signaling"/>
</dbReference>
<dbReference type="PRO" id="PR:P01244"/>
<dbReference type="Proteomes" id="UP000002494">
    <property type="component" value="Chromosome 10"/>
</dbReference>
<dbReference type="Bgee" id="ENSRNOG00000011207">
    <property type="expression patterns" value="Expressed in quadriceps femoris and 2 other cell types or tissues"/>
</dbReference>
<dbReference type="ExpressionAtlas" id="P01244">
    <property type="expression patterns" value="baseline and differential"/>
</dbReference>
<dbReference type="GO" id="GO:0005576">
    <property type="term" value="C:extracellular region"/>
    <property type="evidence" value="ECO:0000304"/>
    <property type="project" value="Reactome"/>
</dbReference>
<dbReference type="GO" id="GO:0005615">
    <property type="term" value="C:extracellular space"/>
    <property type="evidence" value="ECO:0000314"/>
    <property type="project" value="RGD"/>
</dbReference>
<dbReference type="GO" id="GO:0070195">
    <property type="term" value="C:growth hormone receptor complex"/>
    <property type="evidence" value="ECO:0000266"/>
    <property type="project" value="RGD"/>
</dbReference>
<dbReference type="GO" id="GO:0005634">
    <property type="term" value="C:nucleus"/>
    <property type="evidence" value="ECO:0000266"/>
    <property type="project" value="RGD"/>
</dbReference>
<dbReference type="GO" id="GO:0005886">
    <property type="term" value="C:plasma membrane"/>
    <property type="evidence" value="ECO:0000266"/>
    <property type="project" value="RGD"/>
</dbReference>
<dbReference type="GO" id="GO:0030141">
    <property type="term" value="C:secretory granule"/>
    <property type="evidence" value="ECO:0000314"/>
    <property type="project" value="RGD"/>
</dbReference>
<dbReference type="GO" id="GO:0005802">
    <property type="term" value="C:trans-Golgi network"/>
    <property type="evidence" value="ECO:0000266"/>
    <property type="project" value="RGD"/>
</dbReference>
<dbReference type="GO" id="GO:0005125">
    <property type="term" value="F:cytokine activity"/>
    <property type="evidence" value="ECO:0000266"/>
    <property type="project" value="RGD"/>
</dbReference>
<dbReference type="GO" id="GO:0008083">
    <property type="term" value="F:growth factor activity"/>
    <property type="evidence" value="ECO:0000266"/>
    <property type="project" value="RGD"/>
</dbReference>
<dbReference type="GO" id="GO:0070186">
    <property type="term" value="F:growth hormone activity"/>
    <property type="evidence" value="ECO:0000266"/>
    <property type="project" value="RGD"/>
</dbReference>
<dbReference type="GO" id="GO:0005131">
    <property type="term" value="F:growth hormone receptor binding"/>
    <property type="evidence" value="ECO:0000266"/>
    <property type="project" value="RGD"/>
</dbReference>
<dbReference type="GO" id="GO:0005179">
    <property type="term" value="F:hormone activity"/>
    <property type="evidence" value="ECO:0000314"/>
    <property type="project" value="RGD"/>
</dbReference>
<dbReference type="GO" id="GO:0046872">
    <property type="term" value="F:metal ion binding"/>
    <property type="evidence" value="ECO:0007669"/>
    <property type="project" value="UniProtKB-KW"/>
</dbReference>
<dbReference type="GO" id="GO:0005148">
    <property type="term" value="F:prolactin receptor binding"/>
    <property type="evidence" value="ECO:0000266"/>
    <property type="project" value="RGD"/>
</dbReference>
<dbReference type="GO" id="GO:0048513">
    <property type="term" value="P:animal organ development"/>
    <property type="evidence" value="ECO:0000318"/>
    <property type="project" value="GO_Central"/>
</dbReference>
<dbReference type="GO" id="GO:0070977">
    <property type="term" value="P:bone maturation"/>
    <property type="evidence" value="ECO:0000266"/>
    <property type="project" value="RGD"/>
</dbReference>
<dbReference type="GO" id="GO:0007259">
    <property type="term" value="P:cell surface receptor signaling pathway via JAK-STAT"/>
    <property type="evidence" value="ECO:0000266"/>
    <property type="project" value="RGD"/>
</dbReference>
<dbReference type="GO" id="GO:0097696">
    <property type="term" value="P:cell surface receptor signaling pathway via STAT"/>
    <property type="evidence" value="ECO:0000266"/>
    <property type="project" value="RGD"/>
</dbReference>
<dbReference type="GO" id="GO:0071469">
    <property type="term" value="P:cellular response to alkaline pH"/>
    <property type="evidence" value="ECO:0000270"/>
    <property type="project" value="RGD"/>
</dbReference>
<dbReference type="GO" id="GO:0032869">
    <property type="term" value="P:cellular response to insulin stimulus"/>
    <property type="evidence" value="ECO:0000266"/>
    <property type="project" value="RGD"/>
</dbReference>
<dbReference type="GO" id="GO:0097067">
    <property type="term" value="P:cellular response to thyroid hormone stimulus"/>
    <property type="evidence" value="ECO:0000270"/>
    <property type="project" value="RGD"/>
</dbReference>
<dbReference type="GO" id="GO:0019221">
    <property type="term" value="P:cytokine-mediated signaling pathway"/>
    <property type="evidence" value="ECO:0000266"/>
    <property type="project" value="RGD"/>
</dbReference>
<dbReference type="GO" id="GO:0007565">
    <property type="term" value="P:female pregnancy"/>
    <property type="evidence" value="ECO:0000270"/>
    <property type="project" value="RGD"/>
</dbReference>
<dbReference type="GO" id="GO:0060396">
    <property type="term" value="P:growth hormone receptor signaling pathway"/>
    <property type="evidence" value="ECO:0000266"/>
    <property type="project" value="RGD"/>
</dbReference>
<dbReference type="GO" id="GO:0060397">
    <property type="term" value="P:growth hormone receptor signaling pathway via JAK-STAT"/>
    <property type="evidence" value="ECO:0000266"/>
    <property type="project" value="RGD"/>
</dbReference>
<dbReference type="GO" id="GO:0048286">
    <property type="term" value="P:lung alveolus development"/>
    <property type="evidence" value="ECO:0000315"/>
    <property type="project" value="RGD"/>
</dbReference>
<dbReference type="GO" id="GO:0007405">
    <property type="term" value="P:neuroblast proliferation"/>
    <property type="evidence" value="ECO:0000314"/>
    <property type="project" value="RGD"/>
</dbReference>
<dbReference type="GO" id="GO:0010828">
    <property type="term" value="P:positive regulation of D-glucose transmembrane transport"/>
    <property type="evidence" value="ECO:0000266"/>
    <property type="project" value="RGD"/>
</dbReference>
<dbReference type="GO" id="GO:0045927">
    <property type="term" value="P:positive regulation of growth"/>
    <property type="evidence" value="ECO:0000315"/>
    <property type="project" value="RGD"/>
</dbReference>
<dbReference type="GO" id="GO:0043568">
    <property type="term" value="P:positive regulation of insulin-like growth factor receptor signaling pathway"/>
    <property type="evidence" value="ECO:0000266"/>
    <property type="project" value="RGD"/>
</dbReference>
<dbReference type="GO" id="GO:0040018">
    <property type="term" value="P:positive regulation of multicellular organism growth"/>
    <property type="evidence" value="ECO:0000266"/>
    <property type="project" value="RGD"/>
</dbReference>
<dbReference type="GO" id="GO:0050769">
    <property type="term" value="P:positive regulation of neurogenesis"/>
    <property type="evidence" value="ECO:0000314"/>
    <property type="project" value="RGD"/>
</dbReference>
<dbReference type="GO" id="GO:0051897">
    <property type="term" value="P:positive regulation of phosphatidylinositol 3-kinase/protein kinase B signal transduction"/>
    <property type="evidence" value="ECO:0000266"/>
    <property type="project" value="RGD"/>
</dbReference>
<dbReference type="GO" id="GO:0046427">
    <property type="term" value="P:positive regulation of receptor signaling pathway via JAK-STAT"/>
    <property type="evidence" value="ECO:0000266"/>
    <property type="project" value="RGD"/>
</dbReference>
<dbReference type="GO" id="GO:0090031">
    <property type="term" value="P:positive regulation of steroid hormone biosynthetic process"/>
    <property type="evidence" value="ECO:0000314"/>
    <property type="project" value="BHF-UCL"/>
</dbReference>
<dbReference type="GO" id="GO:0032107">
    <property type="term" value="P:regulation of response to nutrient levels"/>
    <property type="evidence" value="ECO:0000314"/>
    <property type="project" value="RGD"/>
</dbReference>
<dbReference type="GO" id="GO:0034097">
    <property type="term" value="P:response to cytokine"/>
    <property type="evidence" value="ECO:0000270"/>
    <property type="project" value="RGD"/>
</dbReference>
<dbReference type="GO" id="GO:0032355">
    <property type="term" value="P:response to estradiol"/>
    <property type="evidence" value="ECO:0000270"/>
    <property type="project" value="RGD"/>
</dbReference>
<dbReference type="GO" id="GO:0032094">
    <property type="term" value="P:response to food"/>
    <property type="evidence" value="ECO:0000266"/>
    <property type="project" value="RGD"/>
</dbReference>
<dbReference type="GO" id="GO:0009416">
    <property type="term" value="P:response to light stimulus"/>
    <property type="evidence" value="ECO:0000314"/>
    <property type="project" value="RGD"/>
</dbReference>
<dbReference type="GO" id="GO:0031667">
    <property type="term" value="P:response to nutrient levels"/>
    <property type="evidence" value="ECO:0000318"/>
    <property type="project" value="GO_Central"/>
</dbReference>
<dbReference type="GO" id="GO:0043434">
    <property type="term" value="P:response to peptide hormone"/>
    <property type="evidence" value="ECO:0000270"/>
    <property type="project" value="RGD"/>
</dbReference>
<dbReference type="CDD" id="cd10285">
    <property type="entry name" value="somatotropin_like"/>
    <property type="match status" value="1"/>
</dbReference>
<dbReference type="FunFam" id="1.20.1250.10:FF:000002">
    <property type="entry name" value="Growth hormone"/>
    <property type="match status" value="1"/>
</dbReference>
<dbReference type="Gene3D" id="1.20.1250.10">
    <property type="match status" value="1"/>
</dbReference>
<dbReference type="InterPro" id="IPR009079">
    <property type="entry name" value="4_helix_cytokine-like_core"/>
</dbReference>
<dbReference type="InterPro" id="IPR034975">
    <property type="entry name" value="Somatotropin"/>
</dbReference>
<dbReference type="InterPro" id="IPR001400">
    <property type="entry name" value="Somatotropin/Prolactin"/>
</dbReference>
<dbReference type="InterPro" id="IPR018116">
    <property type="entry name" value="Somatotropin_CS"/>
</dbReference>
<dbReference type="PANTHER" id="PTHR11417:SF2">
    <property type="entry name" value="SOMATOTROPIN"/>
    <property type="match status" value="1"/>
</dbReference>
<dbReference type="PANTHER" id="PTHR11417">
    <property type="entry name" value="SOMATOTROPIN,PROLACTIN"/>
    <property type="match status" value="1"/>
</dbReference>
<dbReference type="Pfam" id="PF00103">
    <property type="entry name" value="Hormone_1"/>
    <property type="match status" value="1"/>
</dbReference>
<dbReference type="PRINTS" id="PR00836">
    <property type="entry name" value="SOMATOTROPIN"/>
</dbReference>
<dbReference type="SUPFAM" id="SSF47266">
    <property type="entry name" value="4-helical cytokines"/>
    <property type="match status" value="1"/>
</dbReference>
<dbReference type="PROSITE" id="PS00266">
    <property type="entry name" value="SOMATOTROPIN_1"/>
    <property type="match status" value="1"/>
</dbReference>
<dbReference type="PROSITE" id="PS00338">
    <property type="entry name" value="SOMATOTROPIN_2"/>
    <property type="match status" value="1"/>
</dbReference>
<sequence length="216" mass="24656">MAADSQTPWLLTFSLLCLLWPQEAGAFPAMPLSSLFANAVLRAQHLHQLAADTYKEFERAYIPEGQRYSIQNAQAAFCFSETIPAPTGKEEAQQRTDMELLRFSLLLIQSWLGPVQFLSRIFTNSLMFGTSDRVYEKLKDLEEGIQALMQELEDGSPRIGQILKQTYDKFDANMRSDDALLKNYGLLSCFKKDLHKAETYLRVMKCRRFAESSCAF</sequence>
<gene>
    <name type="primary">Gh1</name>
    <name type="synonym">Gh</name>
</gene>